<keyword id="KW-0025">Alternative splicing</keyword>
<keyword id="KW-1003">Cell membrane</keyword>
<keyword id="KW-0217">Developmental protein</keyword>
<keyword id="KW-1015">Disulfide bond</keyword>
<keyword id="KW-0245">EGF-like domain</keyword>
<keyword id="KW-0325">Glycoprotein</keyword>
<keyword id="KW-0472">Membrane</keyword>
<keyword id="KW-1185">Reference proteome</keyword>
<keyword id="KW-0677">Repeat</keyword>
<keyword id="KW-0732">Signal</keyword>
<keyword id="KW-0812">Transmembrane</keyword>
<keyword id="KW-1133">Transmembrane helix</keyword>
<sequence>MGAQAPLRLPAAPPLAVCGYTSVLLLFAFCLPGSRASNQPAGGGGDCPGGRGKSNCSELNLRESDIRVCDESSCKYGGVCKEDGDGLKCACQFQCHTNYIPVCGSNGDTYQNECFLRRAACKHQKDITVVARGPCYSDNGSGSGEGEEEGSGAGAHRKHSKCGPCKYKAECDEDAENVGCVCNIDCSGYSFNPVCASDGSSYNNPCFVREASCIKQEQIDIRHLGHCTDTDDVSLLGKKDDGLQYRPDVKDAGDEREDVYIGSHMPCPENLNGYCIHGKCEFIYSTQKASCRCESGYTGQHCEKTDFSILYVVPSRQKLTHVLIAAIIGAVQIAIIVAIVMCITRKCPKNNRGRRQKQNLGHFTSDTSSRMV</sequence>
<feature type="signal peptide" evidence="2">
    <location>
        <begin position="1"/>
        <end position="36"/>
    </location>
</feature>
<feature type="chain" id="PRO_0000286057" description="Tomoregulin-1" evidence="2">
    <location>
        <begin position="37"/>
        <end position="372"/>
    </location>
</feature>
<feature type="topological domain" description="Extracellular" evidence="13">
    <location>
        <begin position="37"/>
        <end position="322"/>
    </location>
</feature>
<feature type="transmembrane region" description="Helical" evidence="2">
    <location>
        <begin position="323"/>
        <end position="343"/>
    </location>
</feature>
<feature type="topological domain" description="Cytoplasmic" evidence="13">
    <location>
        <begin position="344"/>
        <end position="372"/>
    </location>
</feature>
<feature type="domain" description="Kazal-like 1" evidence="4">
    <location>
        <begin position="90"/>
        <end position="137"/>
    </location>
</feature>
<feature type="domain" description="Kazal-like 2" evidence="4">
    <location>
        <begin position="181"/>
        <end position="229"/>
    </location>
</feature>
<feature type="domain" description="EGF-like" evidence="3">
    <location>
        <begin position="263"/>
        <end position="303"/>
    </location>
</feature>
<feature type="region of interest" description="Disordered" evidence="5">
    <location>
        <begin position="139"/>
        <end position="161"/>
    </location>
</feature>
<feature type="region of interest" description="Disordered" evidence="5">
    <location>
        <begin position="351"/>
        <end position="372"/>
    </location>
</feature>
<feature type="compositionally biased region" description="Polar residues" evidence="5">
    <location>
        <begin position="358"/>
        <end position="372"/>
    </location>
</feature>
<feature type="site" description="Reactive bond" evidence="4">
    <location>
        <begin position="97"/>
        <end position="98"/>
    </location>
</feature>
<feature type="site" description="Reactive bond" evidence="4">
    <location>
        <begin position="188"/>
        <end position="189"/>
    </location>
</feature>
<feature type="glycosylation site" description="N-linked (GlcNAc...) asparagine" evidence="2">
    <location>
        <position position="55"/>
    </location>
</feature>
<feature type="glycosylation site" description="N-linked (GlcNAc...) asparagine" evidence="2">
    <location>
        <position position="139"/>
    </location>
</feature>
<feature type="disulfide bond" evidence="4">
    <location>
        <begin position="91"/>
        <end position="121"/>
    </location>
</feature>
<feature type="disulfide bond" evidence="4">
    <location>
        <begin position="95"/>
        <end position="114"/>
    </location>
</feature>
<feature type="disulfide bond" evidence="4">
    <location>
        <begin position="103"/>
        <end position="135"/>
    </location>
</feature>
<feature type="disulfide bond" evidence="4">
    <location>
        <begin position="182"/>
        <end position="213"/>
    </location>
</feature>
<feature type="disulfide bond" evidence="4">
    <location>
        <begin position="186"/>
        <end position="206"/>
    </location>
</feature>
<feature type="disulfide bond" evidence="4">
    <location>
        <begin position="195"/>
        <end position="227"/>
    </location>
</feature>
<feature type="disulfide bond" evidence="3">
    <location>
        <begin position="267"/>
        <end position="280"/>
    </location>
</feature>
<feature type="disulfide bond" evidence="3">
    <location>
        <begin position="275"/>
        <end position="291"/>
    </location>
</feature>
<feature type="disulfide bond" evidence="3">
    <location>
        <begin position="293"/>
        <end position="302"/>
    </location>
</feature>
<feature type="splice variant" id="VSP_024960" description="In isoform 2 and isoform 3." evidence="10 11">
    <original>G</original>
    <variation>GA</variation>
    <location>
        <position position="146"/>
    </location>
</feature>
<feature type="splice variant" id="VSP_024961" description="In isoform 3." evidence="11">
    <location>
        <begin position="251"/>
        <end position="252"/>
    </location>
</feature>
<feature type="sequence conflict" description="In Ref. 4; CAB90827." evidence="13" ref="4">
    <original>L</original>
    <variation>S</variation>
    <location>
        <position position="235"/>
    </location>
</feature>
<feature type="sequence conflict" description="In Ref. 4; CAB90827." evidence="13" ref="4">
    <original>D</original>
    <variation>P</variation>
    <location>
        <position position="241"/>
    </location>
</feature>
<feature type="sequence conflict" description="In Ref. 4; CAB90827." evidence="13" ref="4">
    <original>Q</original>
    <variation>L</variation>
    <location>
        <position position="244"/>
    </location>
</feature>
<feature type="sequence conflict" description="In Ref. 4; CAB90827." evidence="13" ref="4">
    <original>R</original>
    <variation>K</variation>
    <location>
        <position position="370"/>
    </location>
</feature>
<name>TEFF1_MOUSE</name>
<gene>
    <name evidence="12 14" type="primary">Tmeff1</name>
</gene>
<evidence type="ECO:0000250" key="1">
    <source>
        <dbReference type="UniProtKB" id="Q8IYR6"/>
    </source>
</evidence>
<evidence type="ECO:0000255" key="2"/>
<evidence type="ECO:0000255" key="3">
    <source>
        <dbReference type="PROSITE-ProRule" id="PRU00076"/>
    </source>
</evidence>
<evidence type="ECO:0000255" key="4">
    <source>
        <dbReference type="PROSITE-ProRule" id="PRU00798"/>
    </source>
</evidence>
<evidence type="ECO:0000256" key="5">
    <source>
        <dbReference type="SAM" id="MobiDB-lite"/>
    </source>
</evidence>
<evidence type="ECO:0000269" key="6">
    <source>
    </source>
</evidence>
<evidence type="ECO:0000269" key="7">
    <source>
    </source>
</evidence>
<evidence type="ECO:0000269" key="8">
    <source>
    </source>
</evidence>
<evidence type="ECO:0000269" key="9">
    <source>
    </source>
</evidence>
<evidence type="ECO:0000303" key="10">
    <source>
    </source>
</evidence>
<evidence type="ECO:0000303" key="11">
    <source>
    </source>
</evidence>
<evidence type="ECO:0000303" key="12">
    <source>
    </source>
</evidence>
<evidence type="ECO:0000305" key="13"/>
<evidence type="ECO:0000312" key="14">
    <source>
        <dbReference type="MGI" id="MGI:1926810"/>
    </source>
</evidence>
<protein>
    <recommendedName>
        <fullName>Tomoregulin-1</fullName>
        <shortName>TR-1</shortName>
    </recommendedName>
    <alternativeName>
        <fullName>M7365</fullName>
    </alternativeName>
    <alternativeName>
        <fullName>Transmembrane protein with EGF-like and one follistatin-like domain</fullName>
    </alternativeName>
</protein>
<reference key="1">
    <citation type="journal article" date="2009" name="PLoS Biol.">
        <title>Lineage-specific biology revealed by a finished genome assembly of the mouse.</title>
        <authorList>
            <person name="Church D.M."/>
            <person name="Goodstadt L."/>
            <person name="Hillier L.W."/>
            <person name="Zody M.C."/>
            <person name="Goldstein S."/>
            <person name="She X."/>
            <person name="Bult C.J."/>
            <person name="Agarwala R."/>
            <person name="Cherry J.L."/>
            <person name="DiCuccio M."/>
            <person name="Hlavina W."/>
            <person name="Kapustin Y."/>
            <person name="Meric P."/>
            <person name="Maglott D."/>
            <person name="Birtle Z."/>
            <person name="Marques A.C."/>
            <person name="Graves T."/>
            <person name="Zhou S."/>
            <person name="Teague B."/>
            <person name="Potamousis K."/>
            <person name="Churas C."/>
            <person name="Place M."/>
            <person name="Herschleb J."/>
            <person name="Runnheim R."/>
            <person name="Forrest D."/>
            <person name="Amos-Landgraf J."/>
            <person name="Schwartz D.C."/>
            <person name="Cheng Z."/>
            <person name="Lindblad-Toh K."/>
            <person name="Eichler E.E."/>
            <person name="Ponting C.P."/>
        </authorList>
    </citation>
    <scope>NUCLEOTIDE SEQUENCE [LARGE SCALE GENOMIC DNA]</scope>
    <source>
        <strain>C57BL/6J</strain>
    </source>
</reference>
<reference key="2">
    <citation type="journal article" date="2004" name="Genome Res.">
        <title>The status, quality, and expansion of the NIH full-length cDNA project: the Mammalian Gene Collection (MGC).</title>
        <authorList>
            <consortium name="The MGC Project Team"/>
        </authorList>
    </citation>
    <scope>NUCLEOTIDE SEQUENCE [LARGE SCALE MRNA] (ISOFORM 1)</scope>
    <source>
        <strain>C57BL/6J</strain>
    </source>
</reference>
<reference key="3">
    <citation type="journal article" date="2000" name="Mech. Dev.">
        <title>Expression of the follistatin/EGF-containing transmembrane protein M7365 (tomoregulin-1) during mouse development.</title>
        <authorList>
            <person name="Eib D.W."/>
            <person name="Holling T.M."/>
            <person name="Zwijsen A."/>
            <person name="Dewulf N."/>
            <person name="de Groot E."/>
            <person name="van den Eijnden-van Raaij A.J.M."/>
            <person name="Huylebroeck D."/>
            <person name="Martens G.J.M."/>
        </authorList>
    </citation>
    <scope>NUCLEOTIDE SEQUENCE [MRNA] OF 28-372 (ISOFORM 2)</scope>
    <scope>TISSUE SPECIFICITY</scope>
    <scope>DEVELOPMENTAL STAGE</scope>
    <source>
        <tissue>Brain</tissue>
    </source>
</reference>
<reference key="4">
    <citation type="journal article" date="2005" name="Science">
        <title>The transcriptional landscape of the mammalian genome.</title>
        <authorList>
            <person name="Carninci P."/>
            <person name="Kasukawa T."/>
            <person name="Katayama S."/>
            <person name="Gough J."/>
            <person name="Frith M.C."/>
            <person name="Maeda N."/>
            <person name="Oyama R."/>
            <person name="Ravasi T."/>
            <person name="Lenhard B."/>
            <person name="Wells C."/>
            <person name="Kodzius R."/>
            <person name="Shimokawa K."/>
            <person name="Bajic V.B."/>
            <person name="Brenner S.E."/>
            <person name="Batalov S."/>
            <person name="Forrest A.R."/>
            <person name="Zavolan M."/>
            <person name="Davis M.J."/>
            <person name="Wilming L.G."/>
            <person name="Aidinis V."/>
            <person name="Allen J.E."/>
            <person name="Ambesi-Impiombato A."/>
            <person name="Apweiler R."/>
            <person name="Aturaliya R.N."/>
            <person name="Bailey T.L."/>
            <person name="Bansal M."/>
            <person name="Baxter L."/>
            <person name="Beisel K.W."/>
            <person name="Bersano T."/>
            <person name="Bono H."/>
            <person name="Chalk A.M."/>
            <person name="Chiu K.P."/>
            <person name="Choudhary V."/>
            <person name="Christoffels A."/>
            <person name="Clutterbuck D.R."/>
            <person name="Crowe M.L."/>
            <person name="Dalla E."/>
            <person name="Dalrymple B.P."/>
            <person name="de Bono B."/>
            <person name="Della Gatta G."/>
            <person name="di Bernardo D."/>
            <person name="Down T."/>
            <person name="Engstrom P."/>
            <person name="Fagiolini M."/>
            <person name="Faulkner G."/>
            <person name="Fletcher C.F."/>
            <person name="Fukushima T."/>
            <person name="Furuno M."/>
            <person name="Futaki S."/>
            <person name="Gariboldi M."/>
            <person name="Georgii-Hemming P."/>
            <person name="Gingeras T.R."/>
            <person name="Gojobori T."/>
            <person name="Green R.E."/>
            <person name="Gustincich S."/>
            <person name="Harbers M."/>
            <person name="Hayashi Y."/>
            <person name="Hensch T.K."/>
            <person name="Hirokawa N."/>
            <person name="Hill D."/>
            <person name="Huminiecki L."/>
            <person name="Iacono M."/>
            <person name="Ikeo K."/>
            <person name="Iwama A."/>
            <person name="Ishikawa T."/>
            <person name="Jakt M."/>
            <person name="Kanapin A."/>
            <person name="Katoh M."/>
            <person name="Kawasawa Y."/>
            <person name="Kelso J."/>
            <person name="Kitamura H."/>
            <person name="Kitano H."/>
            <person name="Kollias G."/>
            <person name="Krishnan S.P."/>
            <person name="Kruger A."/>
            <person name="Kummerfeld S.K."/>
            <person name="Kurochkin I.V."/>
            <person name="Lareau L.F."/>
            <person name="Lazarevic D."/>
            <person name="Lipovich L."/>
            <person name="Liu J."/>
            <person name="Liuni S."/>
            <person name="McWilliam S."/>
            <person name="Madan Babu M."/>
            <person name="Madera M."/>
            <person name="Marchionni L."/>
            <person name="Matsuda H."/>
            <person name="Matsuzawa S."/>
            <person name="Miki H."/>
            <person name="Mignone F."/>
            <person name="Miyake S."/>
            <person name="Morris K."/>
            <person name="Mottagui-Tabar S."/>
            <person name="Mulder N."/>
            <person name="Nakano N."/>
            <person name="Nakauchi H."/>
            <person name="Ng P."/>
            <person name="Nilsson R."/>
            <person name="Nishiguchi S."/>
            <person name="Nishikawa S."/>
            <person name="Nori F."/>
            <person name="Ohara O."/>
            <person name="Okazaki Y."/>
            <person name="Orlando V."/>
            <person name="Pang K.C."/>
            <person name="Pavan W.J."/>
            <person name="Pavesi G."/>
            <person name="Pesole G."/>
            <person name="Petrovsky N."/>
            <person name="Piazza S."/>
            <person name="Reed J."/>
            <person name="Reid J.F."/>
            <person name="Ring B.Z."/>
            <person name="Ringwald M."/>
            <person name="Rost B."/>
            <person name="Ruan Y."/>
            <person name="Salzberg S.L."/>
            <person name="Sandelin A."/>
            <person name="Schneider C."/>
            <person name="Schoenbach C."/>
            <person name="Sekiguchi K."/>
            <person name="Semple C.A."/>
            <person name="Seno S."/>
            <person name="Sessa L."/>
            <person name="Sheng Y."/>
            <person name="Shibata Y."/>
            <person name="Shimada H."/>
            <person name="Shimada K."/>
            <person name="Silva D."/>
            <person name="Sinclair B."/>
            <person name="Sperling S."/>
            <person name="Stupka E."/>
            <person name="Sugiura K."/>
            <person name="Sultana R."/>
            <person name="Takenaka Y."/>
            <person name="Taki K."/>
            <person name="Tammoja K."/>
            <person name="Tan S.L."/>
            <person name="Tang S."/>
            <person name="Taylor M.S."/>
            <person name="Tegner J."/>
            <person name="Teichmann S.A."/>
            <person name="Ueda H.R."/>
            <person name="van Nimwegen E."/>
            <person name="Verardo R."/>
            <person name="Wei C.L."/>
            <person name="Yagi K."/>
            <person name="Yamanishi H."/>
            <person name="Zabarovsky E."/>
            <person name="Zhu S."/>
            <person name="Zimmer A."/>
            <person name="Hide W."/>
            <person name="Bult C."/>
            <person name="Grimmond S.M."/>
            <person name="Teasdale R.D."/>
            <person name="Liu E.T."/>
            <person name="Brusic V."/>
            <person name="Quackenbush J."/>
            <person name="Wahlestedt C."/>
            <person name="Mattick J.S."/>
            <person name="Hume D.A."/>
            <person name="Kai C."/>
            <person name="Sasaki D."/>
            <person name="Tomaru Y."/>
            <person name="Fukuda S."/>
            <person name="Kanamori-Katayama M."/>
            <person name="Suzuki M."/>
            <person name="Aoki J."/>
            <person name="Arakawa T."/>
            <person name="Iida J."/>
            <person name="Imamura K."/>
            <person name="Itoh M."/>
            <person name="Kato T."/>
            <person name="Kawaji H."/>
            <person name="Kawagashira N."/>
            <person name="Kawashima T."/>
            <person name="Kojima M."/>
            <person name="Kondo S."/>
            <person name="Konno H."/>
            <person name="Nakano K."/>
            <person name="Ninomiya N."/>
            <person name="Nishio T."/>
            <person name="Okada M."/>
            <person name="Plessy C."/>
            <person name="Shibata K."/>
            <person name="Shiraki T."/>
            <person name="Suzuki S."/>
            <person name="Tagami M."/>
            <person name="Waki K."/>
            <person name="Watahiki A."/>
            <person name="Okamura-Oho Y."/>
            <person name="Suzuki H."/>
            <person name="Kawai J."/>
            <person name="Hayashizaki Y."/>
        </authorList>
    </citation>
    <scope>NUCLEOTIDE SEQUENCE [LARGE SCALE MRNA] OF 118-372 (ISOFORM 2)</scope>
    <scope>NUCLEOTIDE SEQUENCE [LARGE SCALE MRNA] OF 125-372 (ISOFORM 3)</scope>
    <source>
        <strain>C57BL/6J</strain>
        <tissue>Brain cortex</tissue>
        <tissue>Spinal cord</tissue>
    </source>
</reference>
<reference key="5">
    <citation type="journal article" date="2001" name="Brain Res. Mol. Brain Res.">
        <title>Expression of TMEFF1 mRNA in the mouse central nervous system: precise examination and comparative studies of TMEFF1 and TMEFF2.</title>
        <authorList>
            <person name="Kanemoto N."/>
            <person name="Horie M."/>
            <person name="Omori K."/>
            <person name="Nishino N."/>
            <person name="Kondo M."/>
            <person name="Noguchi K."/>
            <person name="Tanigami A."/>
        </authorList>
    </citation>
    <scope>TISSUE SPECIFICITY</scope>
</reference>
<reference key="6">
    <citation type="journal article" date="2001" name="Mech. Dev.">
        <title>The expression pattern of tomoregulin-1 in urodele limb regeneration and mouse limb development.</title>
        <authorList>
            <person name="Morais da Silva S."/>
            <person name="Gates P.B."/>
            <person name="Eib D.W."/>
            <person name="Martens G.J.M."/>
            <person name="Brockes J.P."/>
        </authorList>
    </citation>
    <scope>DEVELOPMENTAL STAGE</scope>
</reference>
<reference key="7">
    <citation type="journal article" date="2024" name="Nature">
        <title>TMEFF1 is a neuron-specific restriction factor for herpes simplex virus.</title>
        <authorList>
            <person name="Dai Y."/>
            <person name="Idorn M."/>
            <person name="Serrero M.C."/>
            <person name="Pan X."/>
            <person name="Thomsen E.A."/>
            <person name="Narita R."/>
            <person name="Maimaitili M."/>
            <person name="Qian X."/>
            <person name="Iversen M.B."/>
            <person name="Reinert L.S."/>
            <person name="Flygaard R.K."/>
            <person name="Chen M."/>
            <person name="Ding X."/>
            <person name="Zhang B.C."/>
            <person name="Carter-Timofte M.E."/>
            <person name="Lu Q."/>
            <person name="Jiang Z."/>
            <person name="Zhong Y."/>
            <person name="Zhang S."/>
            <person name="Da L."/>
            <person name="Zhu J."/>
            <person name="Denham M."/>
            <person name="Nissen P."/>
            <person name="Mogensen T.H."/>
            <person name="Mikkelsen J.G."/>
            <person name="Zhang S.Y."/>
            <person name="Casanova J.L."/>
            <person name="Cai Y."/>
            <person name="Paludan S.R."/>
        </authorList>
    </citation>
    <scope>FUNCTION</scope>
    <scope>SUBCELLULAR LOCATION</scope>
    <scope>DISRUPTION PHENOTYPE</scope>
    <scope>TISSUE SPECIFICITY</scope>
</reference>
<dbReference type="EMBL" id="AL772151">
    <property type="status" value="NOT_ANNOTATED_CDS"/>
    <property type="molecule type" value="Genomic_DNA"/>
</dbReference>
<dbReference type="EMBL" id="AL807771">
    <property type="status" value="NOT_ANNOTATED_CDS"/>
    <property type="molecule type" value="Genomic_DNA"/>
</dbReference>
<dbReference type="EMBL" id="BC057598">
    <property type="protein sequence ID" value="AAH57598.1"/>
    <property type="molecule type" value="mRNA"/>
</dbReference>
<dbReference type="EMBL" id="AJ400622">
    <property type="protein sequence ID" value="CAB90827.1"/>
    <property type="status" value="ALT_INIT"/>
    <property type="molecule type" value="mRNA"/>
</dbReference>
<dbReference type="EMBL" id="AK043792">
    <property type="protein sequence ID" value="BAC31655.1"/>
    <property type="molecule type" value="mRNA"/>
</dbReference>
<dbReference type="EMBL" id="AK079633">
    <property type="protein sequence ID" value="BAC37709.1"/>
    <property type="molecule type" value="mRNA"/>
</dbReference>
<dbReference type="CCDS" id="CCDS18168.1">
    <molecule id="Q6PFE7-1"/>
</dbReference>
<dbReference type="RefSeq" id="NP_001343201.1">
    <molecule id="Q6PFE7-2"/>
    <property type="nucleotide sequence ID" value="NM_001356272.2"/>
</dbReference>
<dbReference type="RefSeq" id="NP_001413110.1">
    <molecule id="Q6PFE7-3"/>
    <property type="nucleotide sequence ID" value="NM_001426181.1"/>
</dbReference>
<dbReference type="RefSeq" id="NP_067411.1">
    <molecule id="Q6PFE7-1"/>
    <property type="nucleotide sequence ID" value="NM_021436.4"/>
</dbReference>
<dbReference type="RefSeq" id="XP_006537899.1">
    <property type="nucleotide sequence ID" value="XM_006537836.1"/>
</dbReference>
<dbReference type="RefSeq" id="XP_006537900.1">
    <property type="nucleotide sequence ID" value="XM_006537837.1"/>
</dbReference>
<dbReference type="FunCoup" id="Q6PFE7">
    <property type="interactions" value="1077"/>
</dbReference>
<dbReference type="STRING" id="10090.ENSMUSP00000030032"/>
<dbReference type="MEROPS" id="I01.974"/>
<dbReference type="MEROPS" id="I01.978"/>
<dbReference type="GlyConnect" id="2434">
    <molecule id="Q6PFE7-2"/>
    <property type="glycosylation" value="1 N-Linked glycan (1 site)"/>
</dbReference>
<dbReference type="GlyCosmos" id="Q6PFE7">
    <property type="glycosylation" value="1 site, 1 glycan"/>
</dbReference>
<dbReference type="GlyGen" id="Q6PFE7">
    <property type="glycosylation" value="3 sites, 3 N-linked glycans (2 sites), 1 O-linked glycan (1 site)"/>
</dbReference>
<dbReference type="iPTMnet" id="Q6PFE7"/>
<dbReference type="PhosphoSitePlus" id="Q6PFE7"/>
<dbReference type="SwissPalm" id="Q6PFE7"/>
<dbReference type="PaxDb" id="10090-ENSMUSP00000030032"/>
<dbReference type="PeptideAtlas" id="Q6PFE7"/>
<dbReference type="ProteomicsDB" id="263156">
    <molecule id="Q6PFE7-1"/>
</dbReference>
<dbReference type="ProteomicsDB" id="263157">
    <molecule id="Q6PFE7-2"/>
</dbReference>
<dbReference type="ProteomicsDB" id="263158">
    <molecule id="Q6PFE7-3"/>
</dbReference>
<dbReference type="Antibodypedia" id="34902">
    <property type="antibodies" value="208 antibodies from 22 providers"/>
</dbReference>
<dbReference type="DNASU" id="230157"/>
<dbReference type="Ensembl" id="ENSMUST00000030032.13">
    <molecule id="Q6PFE7-1"/>
    <property type="protein sequence ID" value="ENSMUSP00000030032.7"/>
    <property type="gene ID" value="ENSMUSG00000028347.15"/>
</dbReference>
<dbReference type="Ensembl" id="ENSMUST00000123476.8">
    <molecule id="Q6PFE7-1"/>
    <property type="protein sequence ID" value="ENSMUSP00000115841.2"/>
    <property type="gene ID" value="ENSMUSG00000028347.15"/>
</dbReference>
<dbReference type="GeneID" id="230157"/>
<dbReference type="KEGG" id="mmu:230157"/>
<dbReference type="UCSC" id="uc008svk.1">
    <molecule id="Q6PFE7-1"/>
    <property type="organism name" value="mouse"/>
</dbReference>
<dbReference type="UCSC" id="uc008svl.1">
    <molecule id="Q6PFE7-2"/>
    <property type="organism name" value="mouse"/>
</dbReference>
<dbReference type="AGR" id="MGI:1926810"/>
<dbReference type="CTD" id="8577"/>
<dbReference type="MGI" id="MGI:1926810">
    <property type="gene designation" value="Tmeff1"/>
</dbReference>
<dbReference type="VEuPathDB" id="HostDB:ENSMUSG00000028347"/>
<dbReference type="eggNOG" id="KOG3649">
    <property type="taxonomic scope" value="Eukaryota"/>
</dbReference>
<dbReference type="GeneTree" id="ENSGT00940000160714"/>
<dbReference type="InParanoid" id="Q6PFE7"/>
<dbReference type="OMA" id="ARGSCYS"/>
<dbReference type="OrthoDB" id="328123at2759"/>
<dbReference type="PhylomeDB" id="Q6PFE7"/>
<dbReference type="TreeFam" id="TF330868"/>
<dbReference type="BioGRID-ORCS" id="230157">
    <property type="hits" value="3 hits in 78 CRISPR screens"/>
</dbReference>
<dbReference type="ChiTaRS" id="Tmeff1">
    <property type="organism name" value="mouse"/>
</dbReference>
<dbReference type="PRO" id="PR:Q6PFE7"/>
<dbReference type="Proteomes" id="UP000000589">
    <property type="component" value="Chromosome 4"/>
</dbReference>
<dbReference type="RNAct" id="Q6PFE7">
    <property type="molecule type" value="protein"/>
</dbReference>
<dbReference type="Bgee" id="ENSMUSG00000028347">
    <property type="expression patterns" value="Expressed in cortical plate and 246 other cell types or tissues"/>
</dbReference>
<dbReference type="ExpressionAtlas" id="Q6PFE7">
    <property type="expression patterns" value="baseline and differential"/>
</dbReference>
<dbReference type="GO" id="GO:0005886">
    <property type="term" value="C:plasma membrane"/>
    <property type="evidence" value="ECO:0000250"/>
    <property type="project" value="UniProtKB"/>
</dbReference>
<dbReference type="GO" id="GO:0141069">
    <property type="term" value="F:receptor ligand inhibitor activity"/>
    <property type="evidence" value="ECO:0000250"/>
    <property type="project" value="UniProtKB"/>
</dbReference>
<dbReference type="GO" id="GO:0046597">
    <property type="term" value="P:host-mediated suppression of symbiont invasion"/>
    <property type="evidence" value="ECO:0000315"/>
    <property type="project" value="UniProtKB"/>
</dbReference>
<dbReference type="CDD" id="cd00104">
    <property type="entry name" value="KAZAL_FS"/>
    <property type="match status" value="2"/>
</dbReference>
<dbReference type="FunFam" id="3.30.60.30:FF:000051">
    <property type="entry name" value="LOW QUALITY PROTEIN: tomoregulin-1"/>
    <property type="match status" value="1"/>
</dbReference>
<dbReference type="FunFam" id="2.10.25.10:FF:000233">
    <property type="entry name" value="tomoregulin-1 isoform X1"/>
    <property type="match status" value="1"/>
</dbReference>
<dbReference type="FunFam" id="3.30.60.30:FF:000002">
    <property type="entry name" value="tomoregulin-2 isoform X1"/>
    <property type="match status" value="1"/>
</dbReference>
<dbReference type="Gene3D" id="3.30.60.30">
    <property type="match status" value="2"/>
</dbReference>
<dbReference type="Gene3D" id="2.10.25.10">
    <property type="entry name" value="Laminin"/>
    <property type="match status" value="1"/>
</dbReference>
<dbReference type="InterPro" id="IPR000742">
    <property type="entry name" value="EGF-like_dom"/>
</dbReference>
<dbReference type="InterPro" id="IPR002350">
    <property type="entry name" value="Kazal_dom"/>
</dbReference>
<dbReference type="InterPro" id="IPR036058">
    <property type="entry name" value="Kazal_dom_sf"/>
</dbReference>
<dbReference type="PANTHER" id="PTHR21632">
    <property type="entry name" value="REGULATORY PROTEIN ZESTE"/>
    <property type="match status" value="1"/>
</dbReference>
<dbReference type="PANTHER" id="PTHR21632:SF3">
    <property type="entry name" value="TOMOREGULIN-1"/>
    <property type="match status" value="1"/>
</dbReference>
<dbReference type="Pfam" id="PF07648">
    <property type="entry name" value="Kazal_2"/>
    <property type="match status" value="2"/>
</dbReference>
<dbReference type="SMART" id="SM00280">
    <property type="entry name" value="KAZAL"/>
    <property type="match status" value="2"/>
</dbReference>
<dbReference type="SUPFAM" id="SSF57196">
    <property type="entry name" value="EGF/Laminin"/>
    <property type="match status" value="1"/>
</dbReference>
<dbReference type="SUPFAM" id="SSF100895">
    <property type="entry name" value="Kazal-type serine protease inhibitors"/>
    <property type="match status" value="2"/>
</dbReference>
<dbReference type="PROSITE" id="PS00022">
    <property type="entry name" value="EGF_1"/>
    <property type="match status" value="1"/>
</dbReference>
<dbReference type="PROSITE" id="PS01186">
    <property type="entry name" value="EGF_2"/>
    <property type="match status" value="1"/>
</dbReference>
<dbReference type="PROSITE" id="PS50026">
    <property type="entry name" value="EGF_3"/>
    <property type="match status" value="2"/>
</dbReference>
<dbReference type="PROSITE" id="PS51465">
    <property type="entry name" value="KAZAL_2"/>
    <property type="match status" value="2"/>
</dbReference>
<organism>
    <name type="scientific">Mus musculus</name>
    <name type="common">Mouse</name>
    <dbReference type="NCBI Taxonomy" id="10090"/>
    <lineage>
        <taxon>Eukaryota</taxon>
        <taxon>Metazoa</taxon>
        <taxon>Chordata</taxon>
        <taxon>Craniata</taxon>
        <taxon>Vertebrata</taxon>
        <taxon>Euteleostomi</taxon>
        <taxon>Mammalia</taxon>
        <taxon>Eutheria</taxon>
        <taxon>Euarchontoglires</taxon>
        <taxon>Glires</taxon>
        <taxon>Rodentia</taxon>
        <taxon>Myomorpha</taxon>
        <taxon>Muroidea</taxon>
        <taxon>Muridae</taxon>
        <taxon>Murinae</taxon>
        <taxon>Mus</taxon>
        <taxon>Mus</taxon>
    </lineage>
</organism>
<accession>Q6PFE7</accession>
<accession>A2AJN3</accession>
<accession>Q8BRP7</accession>
<accession>Q8C536</accession>
<accession>Q9JJS1</accession>
<proteinExistence type="evidence at transcript level"/>
<comment type="function">
    <text evidence="1 9">Neuron-specific restriction factor that prevents herpes simplex virus 1 (HHV-1) infection in the brain by blocking viral entry (PubMed:39048823). Also able to restrict herpes simplex virus 2 (HHV-2) infection, although to a lesser extent (By similarity). Acts by preventing the association between the viral glycoprotein D (gD) and its cell surface receptor NECTIN1, thereby inhibiting fusion of the virus and the cell membrane (By similarity). Also able to prevent the association between the viral glycoprotein B (gB) and MYH9/NMMHC-IIA and MYH10/NMMHC-IIB receptors (By similarity).</text>
</comment>
<comment type="subunit">
    <text evidence="1">May interact with ST14.</text>
</comment>
<comment type="subcellular location">
    <subcellularLocation>
        <location evidence="9">Cell membrane</location>
        <topology evidence="2">Single-pass type I membrane protein</topology>
    </subcellularLocation>
</comment>
<comment type="alternative products">
    <event type="alternative splicing"/>
    <isoform>
        <id>Q6PFE7-1</id>
        <name>1</name>
        <sequence type="displayed"/>
    </isoform>
    <isoform>
        <id>Q6PFE7-2</id>
        <name>2</name>
        <sequence type="described" ref="VSP_024960"/>
    </isoform>
    <isoform>
        <id>Q6PFE7-3</id>
        <name>3</name>
        <sequence type="described" ref="VSP_024960 VSP_024961"/>
    </isoform>
</comment>
<comment type="tissue specificity">
    <text evidence="6 7 9">Maily expressed in neurons (PubMed:39048823). Expressed in brain, neurointermediate lobe, pars distalis, pancreas, ovary and testis (PubMed:11025219, PubMed:11165370).</text>
</comment>
<comment type="developmental stage">
    <text evidence="6 8">At 8.5 dpc, highly expressed in the first branchial arch, somites, splanchnic mesoderm and ventral foregut epithelium. At 9.5 dpc, highly expressed in motor neurons and superficial neurons from the neural tube, and in the dorsal part of diencephalon and mesencephalon. At 11.5 dpc and 12.5 dpc, expressed in limbs. At 15.5 dpc, highly expressed in brain and spinal cord.</text>
</comment>
<comment type="disruption phenotype">
    <text evidence="9">Mice display increased susceptibility to herpes simplex virus 1 (HHV-1) infection in the brain but not in the periphery.</text>
</comment>
<comment type="similarity">
    <text evidence="13">Belongs to the tomoregulin family.</text>
</comment>
<comment type="sequence caution" evidence="13">
    <conflict type="erroneous initiation">
        <sequence resource="EMBL-CDS" id="CAB90827"/>
    </conflict>
</comment>